<sequence length="716" mass="81193">MTDLGLKWSCEYCTYENWPSAIKCTMCRAQRHNAPIITEEPFKSSSSLDPSLCTTQGGSTLLICPDSSARPRVRIADELPETSSKWSCHMCTYLNWPRAIRCTQCLSQRQQGSQQHSPLSPSETPQTSGSRPSPVTSDPCEEYNDRNRLNMHAQRWPCSACTYENWPKSLRCVVCDHPKPSGSPETPQQDSEAESATSPSIVNEQERENVRTAGGGGGGSRGRLRKLSPPMCKGQAEVKIELASGAVGSDNEQEADFKKLKQIRNRMRRSDWLFLNACAGVVEGDLAAVEAYKSSGGDIARQLTADEVRILNRPSAFDAGFTLVHLAIRFQRQDMLAVLLTEVSQQTAKCIPALVCPELTEQIRREVAAALHRRKGEFPCYFFTDLVTFTLPADIEDLPPNVQEKLFDEVLDRDVQKELEEESPIINWSLELGTRLDSRLYALWNRTAGDCLLDSVLQATWGIYDKDSVLRKSLNDSLHDCSHWFYTRWKEWESWYSQSFGLHFSLREEQWQEDWAFILSLASQPGASLEQTHVFVLAHILRRPIIVYGVKYYKSFRGETLGYTRFQGVYLPLLWEQSFCWKSPIALGYTRGHFSALVAMENDGYDNRGAGANLNTDDDVTVTFLPLVDSERKLLHIHFLSAQEMGTEEQQERMLRQWMDCCVTEGGVLVAMQKSSRRRNHPLVTQMVEKWLDGYRQLAACPTLSDGEEEEEDEDE</sequence>
<organism>
    <name type="scientific">Danio rerio</name>
    <name type="common">Zebrafish</name>
    <name type="synonym">Brachydanio rerio</name>
    <dbReference type="NCBI Taxonomy" id="7955"/>
    <lineage>
        <taxon>Eukaryota</taxon>
        <taxon>Metazoa</taxon>
        <taxon>Chordata</taxon>
        <taxon>Craniata</taxon>
        <taxon>Vertebrata</taxon>
        <taxon>Euteleostomi</taxon>
        <taxon>Actinopterygii</taxon>
        <taxon>Neopterygii</taxon>
        <taxon>Teleostei</taxon>
        <taxon>Ostariophysi</taxon>
        <taxon>Cypriniformes</taxon>
        <taxon>Danionidae</taxon>
        <taxon>Danioninae</taxon>
        <taxon>Danio</taxon>
    </lineage>
</organism>
<proteinExistence type="evidence at transcript level"/>
<accession>A0JMQ9</accession>
<keyword id="KW-0040">ANK repeat</keyword>
<keyword id="KW-0963">Cytoplasm</keyword>
<keyword id="KW-0378">Hydrolase</keyword>
<keyword id="KW-0479">Metal-binding</keyword>
<keyword id="KW-0539">Nucleus</keyword>
<keyword id="KW-0645">Protease</keyword>
<keyword id="KW-1185">Reference proteome</keyword>
<keyword id="KW-0677">Repeat</keyword>
<keyword id="KW-0788">Thiol protease</keyword>
<keyword id="KW-0833">Ubl conjugation pathway</keyword>
<keyword id="KW-0879">Wnt signaling pathway</keyword>
<keyword id="KW-0862">Zinc</keyword>
<keyword id="KW-0863">Zinc-finger</keyword>
<dbReference type="EC" id="3.4.19.12" evidence="2"/>
<dbReference type="EMBL" id="BC125972">
    <property type="protein sequence ID" value="AAI25973.1"/>
    <property type="molecule type" value="mRNA"/>
</dbReference>
<dbReference type="RefSeq" id="NP_001071236.1">
    <property type="nucleotide sequence ID" value="NM_001077768.1"/>
</dbReference>
<dbReference type="RefSeq" id="XP_005158652.1">
    <property type="nucleotide sequence ID" value="XM_005158595.5"/>
</dbReference>
<dbReference type="SMR" id="A0JMQ9"/>
<dbReference type="BioGRID" id="607517">
    <property type="interactions" value="3"/>
</dbReference>
<dbReference type="FunCoup" id="A0JMQ9">
    <property type="interactions" value="1420"/>
</dbReference>
<dbReference type="STRING" id="7955.ENSDARP00000086546"/>
<dbReference type="MEROPS" id="C64.004"/>
<dbReference type="PaxDb" id="7955-ENSDARP00000086546"/>
<dbReference type="Ensembl" id="ENSDART00000092113">
    <property type="protein sequence ID" value="ENSDARP00000086546"/>
    <property type="gene ID" value="ENSDARG00000063190"/>
</dbReference>
<dbReference type="GeneID" id="777720"/>
<dbReference type="KEGG" id="dre:777720"/>
<dbReference type="AGR" id="ZFIN:ZDB-GENE-061110-94"/>
<dbReference type="CTD" id="777720"/>
<dbReference type="ZFIN" id="ZDB-GENE-061110-94">
    <property type="gene designation" value="zranb1b"/>
</dbReference>
<dbReference type="eggNOG" id="KOG4345">
    <property type="taxonomic scope" value="Eukaryota"/>
</dbReference>
<dbReference type="HOGENOM" id="CLU_013907_0_0_1"/>
<dbReference type="InParanoid" id="A0JMQ9"/>
<dbReference type="OMA" id="MCDTKDD"/>
<dbReference type="OrthoDB" id="6275030at2759"/>
<dbReference type="PhylomeDB" id="A0JMQ9"/>
<dbReference type="TreeFam" id="TF323312"/>
<dbReference type="Reactome" id="R-DRE-5689896">
    <property type="pathway name" value="Ovarian tumor domain proteases"/>
</dbReference>
<dbReference type="PRO" id="PR:A0JMQ9"/>
<dbReference type="Proteomes" id="UP000000437">
    <property type="component" value="Alternate scaffold 17"/>
</dbReference>
<dbReference type="Proteomes" id="UP000000437">
    <property type="component" value="Chromosome 17"/>
</dbReference>
<dbReference type="Bgee" id="ENSDARG00000063190">
    <property type="expression patterns" value="Expressed in muscle tissue and 19 other cell types or tissues"/>
</dbReference>
<dbReference type="GO" id="GO:0005737">
    <property type="term" value="C:cytoplasm"/>
    <property type="evidence" value="ECO:0000250"/>
    <property type="project" value="UniProtKB"/>
</dbReference>
<dbReference type="GO" id="GO:0005634">
    <property type="term" value="C:nucleus"/>
    <property type="evidence" value="ECO:0000250"/>
    <property type="project" value="UniProtKB"/>
</dbReference>
<dbReference type="GO" id="GO:0004843">
    <property type="term" value="F:cysteine-type deubiquitinase activity"/>
    <property type="evidence" value="ECO:0000250"/>
    <property type="project" value="UniProtKB"/>
</dbReference>
<dbReference type="GO" id="GO:0070530">
    <property type="term" value="F:K63-linked polyubiquitin modification-dependent protein binding"/>
    <property type="evidence" value="ECO:0000318"/>
    <property type="project" value="GO_Central"/>
</dbReference>
<dbReference type="GO" id="GO:0008270">
    <property type="term" value="F:zinc ion binding"/>
    <property type="evidence" value="ECO:0007669"/>
    <property type="project" value="UniProtKB-KW"/>
</dbReference>
<dbReference type="GO" id="GO:0007420">
    <property type="term" value="P:brain development"/>
    <property type="evidence" value="ECO:0000316"/>
    <property type="project" value="ZFIN"/>
</dbReference>
<dbReference type="GO" id="GO:0016477">
    <property type="term" value="P:cell migration"/>
    <property type="evidence" value="ECO:0000250"/>
    <property type="project" value="UniProtKB"/>
</dbReference>
<dbReference type="GO" id="GO:0021551">
    <property type="term" value="P:central nervous system morphogenesis"/>
    <property type="evidence" value="ECO:0000315"/>
    <property type="project" value="ZFIN"/>
</dbReference>
<dbReference type="GO" id="GO:0007010">
    <property type="term" value="P:cytoskeleton organization"/>
    <property type="evidence" value="ECO:0000250"/>
    <property type="project" value="UniProtKB"/>
</dbReference>
<dbReference type="GO" id="GO:0030177">
    <property type="term" value="P:positive regulation of Wnt signaling pathway"/>
    <property type="evidence" value="ECO:0000250"/>
    <property type="project" value="UniProtKB"/>
</dbReference>
<dbReference type="GO" id="GO:0071947">
    <property type="term" value="P:protein deubiquitination involved in ubiquitin-dependent protein catabolic process"/>
    <property type="evidence" value="ECO:0000318"/>
    <property type="project" value="GO_Central"/>
</dbReference>
<dbReference type="GO" id="GO:0035523">
    <property type="term" value="P:protein K29-linked deubiquitination"/>
    <property type="evidence" value="ECO:0000250"/>
    <property type="project" value="UniProtKB"/>
</dbReference>
<dbReference type="GO" id="GO:1990168">
    <property type="term" value="P:protein K33-linked deubiquitination"/>
    <property type="evidence" value="ECO:0000250"/>
    <property type="project" value="UniProtKB"/>
</dbReference>
<dbReference type="GO" id="GO:0070536">
    <property type="term" value="P:protein K63-linked deubiquitination"/>
    <property type="evidence" value="ECO:0000250"/>
    <property type="project" value="UniProtKB"/>
</dbReference>
<dbReference type="GO" id="GO:0022604">
    <property type="term" value="P:regulation of cell morphogenesis"/>
    <property type="evidence" value="ECO:0000250"/>
    <property type="project" value="UniProtKB"/>
</dbReference>
<dbReference type="GO" id="GO:0016055">
    <property type="term" value="P:Wnt signaling pathway"/>
    <property type="evidence" value="ECO:0007669"/>
    <property type="project" value="UniProtKB-KW"/>
</dbReference>
<dbReference type="CDD" id="cd22767">
    <property type="entry name" value="OTU_ZRANB1"/>
    <property type="match status" value="1"/>
</dbReference>
<dbReference type="FunFam" id="1.25.40.560:FF:000001">
    <property type="entry name" value="ubiquitin thioesterase ZRANB1 isoform X1"/>
    <property type="match status" value="1"/>
</dbReference>
<dbReference type="FunFam" id="4.10.1060.10:FF:000006">
    <property type="entry name" value="ubiquitin thioesterase ZRANB1 isoform X1"/>
    <property type="match status" value="1"/>
</dbReference>
<dbReference type="FunFam" id="4.10.1060.10:FF:000012">
    <property type="entry name" value="ubiquitin thioesterase ZRANB1 isoform X1"/>
    <property type="match status" value="1"/>
</dbReference>
<dbReference type="Gene3D" id="1.25.40.560">
    <property type="match status" value="1"/>
</dbReference>
<dbReference type="Gene3D" id="4.10.1060.10">
    <property type="entry name" value="Zinc finger, RanBP2-type"/>
    <property type="match status" value="2"/>
</dbReference>
<dbReference type="Gene3D" id="2.30.30.380">
    <property type="entry name" value="Zn-finger domain of Sec23/24"/>
    <property type="match status" value="1"/>
</dbReference>
<dbReference type="InterPro" id="IPR041294">
    <property type="entry name" value="AnkUBD"/>
</dbReference>
<dbReference type="InterPro" id="IPR051346">
    <property type="entry name" value="OTU_Deubiquitinase"/>
</dbReference>
<dbReference type="InterPro" id="IPR003323">
    <property type="entry name" value="OTU_dom"/>
</dbReference>
<dbReference type="InterPro" id="IPR001876">
    <property type="entry name" value="Znf_RanBP2"/>
</dbReference>
<dbReference type="InterPro" id="IPR036443">
    <property type="entry name" value="Znf_RanBP2_sf"/>
</dbReference>
<dbReference type="InterPro" id="IPR049768">
    <property type="entry name" value="ZRANB1_OTU"/>
</dbReference>
<dbReference type="PANTHER" id="PTHR13367">
    <property type="entry name" value="UBIQUITIN THIOESTERASE"/>
    <property type="match status" value="1"/>
</dbReference>
<dbReference type="PANTHER" id="PTHR13367:SF28">
    <property type="entry name" value="UBIQUITIN THIOESTERASE ZRANB1"/>
    <property type="match status" value="1"/>
</dbReference>
<dbReference type="Pfam" id="PF18418">
    <property type="entry name" value="AnkUBD"/>
    <property type="match status" value="1"/>
</dbReference>
<dbReference type="Pfam" id="PF02338">
    <property type="entry name" value="OTU"/>
    <property type="match status" value="1"/>
</dbReference>
<dbReference type="Pfam" id="PF00641">
    <property type="entry name" value="Zn_ribbon_RanBP"/>
    <property type="match status" value="1"/>
</dbReference>
<dbReference type="SMART" id="SM00547">
    <property type="entry name" value="ZnF_RBZ"/>
    <property type="match status" value="3"/>
</dbReference>
<dbReference type="SUPFAM" id="SSF90209">
    <property type="entry name" value="Ran binding protein zinc finger-like"/>
    <property type="match status" value="2"/>
</dbReference>
<dbReference type="PROSITE" id="PS50802">
    <property type="entry name" value="OTU"/>
    <property type="match status" value="1"/>
</dbReference>
<dbReference type="PROSITE" id="PS01358">
    <property type="entry name" value="ZF_RANBP2_1"/>
    <property type="match status" value="3"/>
</dbReference>
<dbReference type="PROSITE" id="PS50199">
    <property type="entry name" value="ZF_RANBP2_2"/>
    <property type="match status" value="3"/>
</dbReference>
<evidence type="ECO:0000250" key="1">
    <source>
        <dbReference type="UniProtKB" id="Q6GQQ9"/>
    </source>
</evidence>
<evidence type="ECO:0000250" key="2">
    <source>
        <dbReference type="UniProtKB" id="Q9UGI0"/>
    </source>
</evidence>
<evidence type="ECO:0000255" key="3">
    <source>
        <dbReference type="PROSITE-ProRule" id="PRU00139"/>
    </source>
</evidence>
<evidence type="ECO:0000255" key="4">
    <source>
        <dbReference type="PROSITE-ProRule" id="PRU00322"/>
    </source>
</evidence>
<evidence type="ECO:0000256" key="5">
    <source>
        <dbReference type="SAM" id="MobiDB-lite"/>
    </source>
</evidence>
<evidence type="ECO:0000305" key="6"/>
<reference key="1">
    <citation type="submission" date="2006-10" db="EMBL/GenBank/DDBJ databases">
        <authorList>
            <consortium name="NIH - Zebrafish Gene Collection (ZGC) project"/>
        </authorList>
    </citation>
    <scope>NUCLEOTIDE SEQUENCE [LARGE SCALE MRNA]</scope>
</reference>
<gene>
    <name type="primary">zranb1b</name>
    <name type="synonym">zranb1</name>
    <name type="ORF">zgc:154177</name>
</gene>
<feature type="chain" id="PRO_0000361555" description="Ubiquitin thioesterase zranb1-B">
    <location>
        <begin position="1"/>
        <end position="716"/>
    </location>
</feature>
<feature type="repeat" description="ANK 1">
    <location>
        <begin position="268"/>
        <end position="298"/>
    </location>
</feature>
<feature type="repeat" description="ANK 2">
    <location>
        <begin position="321"/>
        <end position="348"/>
    </location>
</feature>
<feature type="domain" description="OTU" evidence="3">
    <location>
        <begin position="440"/>
        <end position="600"/>
    </location>
</feature>
<feature type="zinc finger region" description="RanBP2-type 1" evidence="4">
    <location>
        <begin position="3"/>
        <end position="33"/>
    </location>
</feature>
<feature type="zinc finger region" description="RanBP2-type 2" evidence="4">
    <location>
        <begin position="82"/>
        <end position="111"/>
    </location>
</feature>
<feature type="zinc finger region" description="RanBP2-type 3" evidence="4">
    <location>
        <begin position="152"/>
        <end position="181"/>
    </location>
</feature>
<feature type="region of interest" description="Disordered" evidence="5">
    <location>
        <begin position="113"/>
        <end position="143"/>
    </location>
</feature>
<feature type="region of interest" description="Disordered" evidence="5">
    <location>
        <begin position="178"/>
        <end position="228"/>
    </location>
</feature>
<feature type="compositionally biased region" description="Polar residues" evidence="5">
    <location>
        <begin position="118"/>
        <end position="136"/>
    </location>
</feature>
<feature type="compositionally biased region" description="Polar residues" evidence="5">
    <location>
        <begin position="183"/>
        <end position="203"/>
    </location>
</feature>
<feature type="active site" description="Nucleophile" evidence="2">
    <location>
        <position position="451"/>
    </location>
</feature>
<feature type="active site" description="Proton acceptor" evidence="1">
    <location>
        <position position="593"/>
    </location>
</feature>
<feature type="binding site" evidence="4">
    <location>
        <position position="10"/>
    </location>
    <ligand>
        <name>Zn(2+)</name>
        <dbReference type="ChEBI" id="CHEBI:29105"/>
        <label>1</label>
    </ligand>
</feature>
<feature type="binding site" evidence="4">
    <location>
        <position position="13"/>
    </location>
    <ligand>
        <name>Zn(2+)</name>
        <dbReference type="ChEBI" id="CHEBI:29105"/>
        <label>1</label>
    </ligand>
</feature>
<feature type="binding site" evidence="4">
    <location>
        <position position="24"/>
    </location>
    <ligand>
        <name>Zn(2+)</name>
        <dbReference type="ChEBI" id="CHEBI:29105"/>
        <label>1</label>
    </ligand>
</feature>
<feature type="binding site" evidence="4">
    <location>
        <position position="27"/>
    </location>
    <ligand>
        <name>Zn(2+)</name>
        <dbReference type="ChEBI" id="CHEBI:29105"/>
        <label>1</label>
    </ligand>
</feature>
<feature type="binding site" evidence="4">
    <location>
        <position position="88"/>
    </location>
    <ligand>
        <name>Zn(2+)</name>
        <dbReference type="ChEBI" id="CHEBI:29105"/>
        <label>2</label>
    </ligand>
</feature>
<feature type="binding site" evidence="4">
    <location>
        <position position="91"/>
    </location>
    <ligand>
        <name>Zn(2+)</name>
        <dbReference type="ChEBI" id="CHEBI:29105"/>
        <label>2</label>
    </ligand>
</feature>
<feature type="binding site" evidence="4">
    <location>
        <position position="102"/>
    </location>
    <ligand>
        <name>Zn(2+)</name>
        <dbReference type="ChEBI" id="CHEBI:29105"/>
        <label>2</label>
    </ligand>
</feature>
<feature type="binding site" evidence="4">
    <location>
        <position position="105"/>
    </location>
    <ligand>
        <name>Zn(2+)</name>
        <dbReference type="ChEBI" id="CHEBI:29105"/>
        <label>2</label>
    </ligand>
</feature>
<feature type="binding site" evidence="4">
    <location>
        <position position="158"/>
    </location>
    <ligand>
        <name>Zn(2+)</name>
        <dbReference type="ChEBI" id="CHEBI:29105"/>
        <label>3</label>
    </ligand>
</feature>
<feature type="binding site" evidence="4">
    <location>
        <position position="161"/>
    </location>
    <ligand>
        <name>Zn(2+)</name>
        <dbReference type="ChEBI" id="CHEBI:29105"/>
        <label>3</label>
    </ligand>
</feature>
<feature type="binding site" evidence="4">
    <location>
        <position position="172"/>
    </location>
    <ligand>
        <name>Zn(2+)</name>
        <dbReference type="ChEBI" id="CHEBI:29105"/>
        <label>3</label>
    </ligand>
</feature>
<feature type="binding site" evidence="4">
    <location>
        <position position="175"/>
    </location>
    <ligand>
        <name>Zn(2+)</name>
        <dbReference type="ChEBI" id="CHEBI:29105"/>
        <label>3</label>
    </ligand>
</feature>
<protein>
    <recommendedName>
        <fullName evidence="6">Ubiquitin thioesterase zranb1-B</fullName>
        <ecNumber evidence="2">3.4.19.12</ecNumber>
    </recommendedName>
    <alternativeName>
        <fullName>Zinc finger Ran-binding domain-containing protein 1-B</fullName>
    </alternativeName>
</protein>
<comment type="function">
    <text evidence="2">Ubiquitin thioesterase, which specifically hydrolyzes 'Lys-29'-linked and 'Lys-33'-linked diubiquitin (By similarity). Also cleaves 'Lys-63'-linked chains, but with 40-fold less efficiency compared to 'Lys-29'-linked ones (By similarity). Positive regulator of the Wnt signaling pathway that deubiquitinates apc protein, a negative regulator of Wnt-mediated transcription (By similarity). Acts as a regulator of autophagy by mediating deubiquitination of pik3c3/vps34, thereby promoting autophagosome maturation (By similarity). Plays a role in the regulation of cell morphology and cytoskeletal organization (By similarity). Required in the stress fiber dynamics and cell migration (By similarity).</text>
</comment>
<comment type="catalytic activity">
    <reaction evidence="2">
        <text>Thiol-dependent hydrolysis of ester, thioester, amide, peptide and isopeptide bonds formed by the C-terminal Gly of ubiquitin (a 76-residue protein attached to proteins as an intracellular targeting signal).</text>
        <dbReference type="EC" id="3.4.19.12"/>
    </reaction>
</comment>
<comment type="subcellular location">
    <subcellularLocation>
        <location evidence="2">Cytoplasm</location>
    </subcellularLocation>
    <subcellularLocation>
        <location evidence="2">Nucleus</location>
    </subcellularLocation>
    <text evidence="2">Enriched in punctate localization in the cytoplasm.</text>
</comment>
<comment type="domain">
    <text evidence="2">The RanBP2-type zinc fingers, also called NZFs, mediate the interaction with ubiquitin and determine linkage specificity. RanBP2-type zinc fingers 1 and 2 (also named NZF1 and NZF2) specifically recognize and bind 'Lys-29'- and 'Lys-33'-linked ubiquitin. RanBP2-type zinc finger 3 (also named NZF3) binds 'Lys-33'-linked ubiquitin and shows weak binding to 'Lys-6'-, 'Lys-48'- and 'Lys-63'-linked ubiquitin chains but it does not interact with 'Lys-29'-linked chains.</text>
</comment>
<comment type="domain">
    <text evidence="2">The OTU domain mediates the deubiquitinating activity.</text>
</comment>
<comment type="domain">
    <text evidence="2">The second ankyrin repeat ANK 2 is termed AnkUBD, it interacts with ubiquitin hydrophobic patch and contributes to linkage specificity.</text>
</comment>
<comment type="similarity">
    <text evidence="6">Belongs to the peptidase C64 family.</text>
</comment>
<name>ZRN1B_DANRE</name>